<protein>
    <recommendedName>
        <fullName evidence="4">Small cysteine-rich protein 2</fullName>
        <shortName evidence="4">Mfav-SCRiP2</shortName>
        <shortName evidence="4">SCRiP2</shortName>
    </recommendedName>
</protein>
<feature type="signal peptide" evidence="3">
    <location>
        <begin position="1"/>
        <end position="24"/>
    </location>
</feature>
<feature type="chain" id="PRO_0000434283" description="Small cysteine-rich protein 2">
    <location>
        <begin position="25"/>
        <end position="68"/>
    </location>
</feature>
<dbReference type="EMBL" id="FJ842103">
    <property type="protein sequence ID" value="ACO24831.1"/>
    <property type="molecule type" value="mRNA"/>
</dbReference>
<dbReference type="GO" id="GO:0005576">
    <property type="term" value="C:extracellular region"/>
    <property type="evidence" value="ECO:0007669"/>
    <property type="project" value="UniProtKB-SubCell"/>
</dbReference>
<dbReference type="GO" id="GO:0042151">
    <property type="term" value="C:nematocyst"/>
    <property type="evidence" value="ECO:0007669"/>
    <property type="project" value="UniProtKB-SubCell"/>
</dbReference>
<dbReference type="GO" id="GO:0090729">
    <property type="term" value="F:toxin activity"/>
    <property type="evidence" value="ECO:0007669"/>
    <property type="project" value="UniProtKB-KW"/>
</dbReference>
<accession>C1KIZ0</accession>
<name>SCR2G_ORBFA</name>
<comment type="function">
    <text evidence="1 2 6">Induces neurotoxic symptoms on zebrafish (By similarity). Has also been claimed to be implied in calcification, but tests on homolog proteins suggest that proteins of this family have a neurotoxic function and not a calcification function (PubMed:19283069).</text>
</comment>
<comment type="subcellular location">
    <subcellularLocation>
        <location>Secreted</location>
    </subcellularLocation>
    <subcellularLocation>
        <location evidence="5">Nematocyst</location>
    </subcellularLocation>
</comment>
<comment type="PTM">
    <text evidence="5">Contains 4 disulfide bonds.</text>
</comment>
<comment type="similarity">
    <text evidence="7">Belongs to the Cnidaria small cysteine-rich protein (SCRiP) family. gamma subfamily.</text>
</comment>
<proteinExistence type="inferred from homology"/>
<evidence type="ECO:0000250" key="1">
    <source>
        <dbReference type="UniProtKB" id="C0H691"/>
    </source>
</evidence>
<evidence type="ECO:0000250" key="2">
    <source>
        <dbReference type="UniProtKB" id="C0H692"/>
    </source>
</evidence>
<evidence type="ECO:0000255" key="3"/>
<evidence type="ECO:0000303" key="4">
    <source>
    </source>
</evidence>
<evidence type="ECO:0000305" key="5"/>
<evidence type="ECO:0000305" key="6">
    <source>
    </source>
</evidence>
<evidence type="ECO:0000305" key="7">
    <source>
    </source>
</evidence>
<sequence>MAVKFHLCLLLIILVGMGAHVAFADQQFCDHPYGTCYYVEDECPEDMPVDCSENFYCTEPTNKCCCYE</sequence>
<organism>
    <name type="scientific">Orbicella faveolata</name>
    <name type="common">Mountainous star coral</name>
    <name type="synonym">Montastraea faveolata</name>
    <dbReference type="NCBI Taxonomy" id="48498"/>
    <lineage>
        <taxon>Eukaryota</taxon>
        <taxon>Metazoa</taxon>
        <taxon>Cnidaria</taxon>
        <taxon>Anthozoa</taxon>
        <taxon>Hexacorallia</taxon>
        <taxon>Scleractinia</taxon>
        <taxon>Faviina</taxon>
        <taxon>Merulinidae</taxon>
        <taxon>Orbicella</taxon>
    </lineage>
</organism>
<reference key="1">
    <citation type="journal article" date="2009" name="PLoS ONE">
        <title>Identification and gene expression analysis of a taxonomically restricted cysteine-rich protein family in reef-building corals.</title>
        <authorList>
            <person name="Sunagawa S."/>
            <person name="DeSalvo M.K."/>
            <person name="Voolstra C.R."/>
            <person name="Reyes-Bermudez A."/>
            <person name="Medina M."/>
        </authorList>
    </citation>
    <scope>NUCLEOTIDE SEQUENCE [MRNA]</scope>
</reference>
<reference key="2">
    <citation type="journal article" date="2024" name="Toxins">
        <title>Evolutionary analysis of cnidaria small cysteine-rich proteins (scrips), an enigmatic neurotoxin family from stony corals and sea anemones (Anthozoa: Hexacorallia).</title>
        <authorList>
            <person name="Barroso R.A."/>
            <person name="Ramos L."/>
            <person name="Moreno H."/>
            <person name="Antunes A."/>
        </authorList>
    </citation>
    <scope>NOMENCLATURE</scope>
</reference>
<keyword id="KW-1015">Disulfide bond</keyword>
<keyword id="KW-0166">Nematocyst</keyword>
<keyword id="KW-0528">Neurotoxin</keyword>
<keyword id="KW-0964">Secreted</keyword>
<keyword id="KW-0732">Signal</keyword>
<keyword id="KW-0800">Toxin</keyword>